<name>RL20_THEAB</name>
<comment type="function">
    <text evidence="1">Binds directly to 23S ribosomal RNA and is necessary for the in vitro assembly process of the 50S ribosomal subunit. It is not involved in the protein synthesizing functions of that subunit.</text>
</comment>
<comment type="similarity">
    <text evidence="1">Belongs to the bacterial ribosomal protein bL20 family.</text>
</comment>
<organism>
    <name type="scientific">Thermosipho africanus (strain TCF52B)</name>
    <dbReference type="NCBI Taxonomy" id="484019"/>
    <lineage>
        <taxon>Bacteria</taxon>
        <taxon>Thermotogati</taxon>
        <taxon>Thermotogota</taxon>
        <taxon>Thermotogae</taxon>
        <taxon>Thermotogales</taxon>
        <taxon>Fervidobacteriaceae</taxon>
        <taxon>Thermosipho</taxon>
    </lineage>
</organism>
<proteinExistence type="inferred from homology"/>
<feature type="chain" id="PRO_1000122383" description="Large ribosomal subunit protein bL20">
    <location>
        <begin position="1"/>
        <end position="118"/>
    </location>
</feature>
<gene>
    <name evidence="1" type="primary">rplT</name>
    <name type="ordered locus">THA_1198</name>
</gene>
<accession>B7IHT4</accession>
<sequence length="118" mass="13644">MRVKNAVNAKKKRRKILKAVKGYHGALSRRYRLAKQAYIKAKKHAYVGRKLKKRDFRKLWITRINIAARNEGLKYNELIHGLKLAGVAINRKMLSELAVNDPESFKEYVNIAKQAIGK</sequence>
<reference key="1">
    <citation type="journal article" date="2009" name="J. Bacteriol.">
        <title>The genome of Thermosipho africanus TCF52B: lateral genetic connections to the Firmicutes and Archaea.</title>
        <authorList>
            <person name="Nesboe C.L."/>
            <person name="Bapteste E."/>
            <person name="Curtis B."/>
            <person name="Dahle H."/>
            <person name="Lopez P."/>
            <person name="Macleod D."/>
            <person name="Dlutek M."/>
            <person name="Bowman S."/>
            <person name="Zhaxybayeva O."/>
            <person name="Birkeland N.-K."/>
            <person name="Doolittle W.F."/>
        </authorList>
    </citation>
    <scope>NUCLEOTIDE SEQUENCE [LARGE SCALE GENOMIC DNA]</scope>
    <source>
        <strain>TCF52B</strain>
    </source>
</reference>
<dbReference type="EMBL" id="CP001185">
    <property type="protein sequence ID" value="ACJ75648.1"/>
    <property type="molecule type" value="Genomic_DNA"/>
</dbReference>
<dbReference type="RefSeq" id="WP_004101417.1">
    <property type="nucleotide sequence ID" value="NC_011653.1"/>
</dbReference>
<dbReference type="SMR" id="B7IHT4"/>
<dbReference type="STRING" id="484019.THA_1198"/>
<dbReference type="KEGG" id="taf:THA_1198"/>
<dbReference type="eggNOG" id="COG0292">
    <property type="taxonomic scope" value="Bacteria"/>
</dbReference>
<dbReference type="HOGENOM" id="CLU_123265_0_1_0"/>
<dbReference type="OrthoDB" id="9808966at2"/>
<dbReference type="Proteomes" id="UP000002453">
    <property type="component" value="Chromosome"/>
</dbReference>
<dbReference type="GO" id="GO:1990904">
    <property type="term" value="C:ribonucleoprotein complex"/>
    <property type="evidence" value="ECO:0007669"/>
    <property type="project" value="UniProtKB-KW"/>
</dbReference>
<dbReference type="GO" id="GO:0005840">
    <property type="term" value="C:ribosome"/>
    <property type="evidence" value="ECO:0007669"/>
    <property type="project" value="UniProtKB-KW"/>
</dbReference>
<dbReference type="GO" id="GO:0019843">
    <property type="term" value="F:rRNA binding"/>
    <property type="evidence" value="ECO:0007669"/>
    <property type="project" value="UniProtKB-UniRule"/>
</dbReference>
<dbReference type="GO" id="GO:0003735">
    <property type="term" value="F:structural constituent of ribosome"/>
    <property type="evidence" value="ECO:0007669"/>
    <property type="project" value="InterPro"/>
</dbReference>
<dbReference type="GO" id="GO:0000027">
    <property type="term" value="P:ribosomal large subunit assembly"/>
    <property type="evidence" value="ECO:0007669"/>
    <property type="project" value="UniProtKB-UniRule"/>
</dbReference>
<dbReference type="GO" id="GO:0006412">
    <property type="term" value="P:translation"/>
    <property type="evidence" value="ECO:0007669"/>
    <property type="project" value="InterPro"/>
</dbReference>
<dbReference type="CDD" id="cd07026">
    <property type="entry name" value="Ribosomal_L20"/>
    <property type="match status" value="1"/>
</dbReference>
<dbReference type="FunFam" id="1.10.1900.20:FF:000001">
    <property type="entry name" value="50S ribosomal protein L20"/>
    <property type="match status" value="1"/>
</dbReference>
<dbReference type="Gene3D" id="6.10.160.10">
    <property type="match status" value="1"/>
</dbReference>
<dbReference type="Gene3D" id="1.10.1900.20">
    <property type="entry name" value="Ribosomal protein L20"/>
    <property type="match status" value="1"/>
</dbReference>
<dbReference type="HAMAP" id="MF_00382">
    <property type="entry name" value="Ribosomal_bL20"/>
    <property type="match status" value="1"/>
</dbReference>
<dbReference type="InterPro" id="IPR005813">
    <property type="entry name" value="Ribosomal_bL20"/>
</dbReference>
<dbReference type="InterPro" id="IPR049946">
    <property type="entry name" value="RIBOSOMAL_L20_CS"/>
</dbReference>
<dbReference type="InterPro" id="IPR035566">
    <property type="entry name" value="Ribosomal_protein_bL20_C"/>
</dbReference>
<dbReference type="NCBIfam" id="TIGR01032">
    <property type="entry name" value="rplT_bact"/>
    <property type="match status" value="1"/>
</dbReference>
<dbReference type="PANTHER" id="PTHR10986">
    <property type="entry name" value="39S RIBOSOMAL PROTEIN L20"/>
    <property type="match status" value="1"/>
</dbReference>
<dbReference type="Pfam" id="PF00453">
    <property type="entry name" value="Ribosomal_L20"/>
    <property type="match status" value="1"/>
</dbReference>
<dbReference type="PRINTS" id="PR00062">
    <property type="entry name" value="RIBOSOMALL20"/>
</dbReference>
<dbReference type="SUPFAM" id="SSF74731">
    <property type="entry name" value="Ribosomal protein L20"/>
    <property type="match status" value="1"/>
</dbReference>
<dbReference type="PROSITE" id="PS00937">
    <property type="entry name" value="RIBOSOMAL_L20"/>
    <property type="match status" value="1"/>
</dbReference>
<protein>
    <recommendedName>
        <fullName evidence="1">Large ribosomal subunit protein bL20</fullName>
    </recommendedName>
    <alternativeName>
        <fullName evidence="2">50S ribosomal protein L20</fullName>
    </alternativeName>
</protein>
<evidence type="ECO:0000255" key="1">
    <source>
        <dbReference type="HAMAP-Rule" id="MF_00382"/>
    </source>
</evidence>
<evidence type="ECO:0000305" key="2"/>
<keyword id="KW-1185">Reference proteome</keyword>
<keyword id="KW-0687">Ribonucleoprotein</keyword>
<keyword id="KW-0689">Ribosomal protein</keyword>
<keyword id="KW-0694">RNA-binding</keyword>
<keyword id="KW-0699">rRNA-binding</keyword>